<keyword id="KW-0030">Aminoacyl-tRNA synthetase</keyword>
<keyword id="KW-0067">ATP-binding</keyword>
<keyword id="KW-0963">Cytoplasm</keyword>
<keyword id="KW-0436">Ligase</keyword>
<keyword id="KW-0547">Nucleotide-binding</keyword>
<keyword id="KW-0648">Protein biosynthesis</keyword>
<dbReference type="EC" id="6.1.1.21" evidence="1"/>
<dbReference type="EMBL" id="CU928158">
    <property type="protein sequence ID" value="CAQ88201.1"/>
    <property type="molecule type" value="Genomic_DNA"/>
</dbReference>
<dbReference type="RefSeq" id="WP_000037895.1">
    <property type="nucleotide sequence ID" value="NC_011740.1"/>
</dbReference>
<dbReference type="SMR" id="B7LKC4"/>
<dbReference type="GeneID" id="75058282"/>
<dbReference type="KEGG" id="efe:EFER_0658"/>
<dbReference type="HOGENOM" id="CLU_025113_1_1_6"/>
<dbReference type="OrthoDB" id="9800814at2"/>
<dbReference type="Proteomes" id="UP000000745">
    <property type="component" value="Chromosome"/>
</dbReference>
<dbReference type="GO" id="GO:0005737">
    <property type="term" value="C:cytoplasm"/>
    <property type="evidence" value="ECO:0007669"/>
    <property type="project" value="UniProtKB-SubCell"/>
</dbReference>
<dbReference type="GO" id="GO:0005524">
    <property type="term" value="F:ATP binding"/>
    <property type="evidence" value="ECO:0007669"/>
    <property type="project" value="UniProtKB-UniRule"/>
</dbReference>
<dbReference type="GO" id="GO:0004821">
    <property type="term" value="F:histidine-tRNA ligase activity"/>
    <property type="evidence" value="ECO:0007669"/>
    <property type="project" value="UniProtKB-UniRule"/>
</dbReference>
<dbReference type="GO" id="GO:0006427">
    <property type="term" value="P:histidyl-tRNA aminoacylation"/>
    <property type="evidence" value="ECO:0007669"/>
    <property type="project" value="UniProtKB-UniRule"/>
</dbReference>
<dbReference type="CDD" id="cd00773">
    <property type="entry name" value="HisRS-like_core"/>
    <property type="match status" value="1"/>
</dbReference>
<dbReference type="CDD" id="cd00859">
    <property type="entry name" value="HisRS_anticodon"/>
    <property type="match status" value="1"/>
</dbReference>
<dbReference type="FunFam" id="3.30.930.10:FF:000005">
    <property type="entry name" value="Histidine--tRNA ligase"/>
    <property type="match status" value="1"/>
</dbReference>
<dbReference type="FunFam" id="3.40.50.800:FF:000007">
    <property type="entry name" value="Histidine--tRNA ligase"/>
    <property type="match status" value="1"/>
</dbReference>
<dbReference type="Gene3D" id="3.40.50.800">
    <property type="entry name" value="Anticodon-binding domain"/>
    <property type="match status" value="1"/>
</dbReference>
<dbReference type="Gene3D" id="3.30.930.10">
    <property type="entry name" value="Bira Bifunctional Protein, Domain 2"/>
    <property type="match status" value="1"/>
</dbReference>
<dbReference type="HAMAP" id="MF_00127">
    <property type="entry name" value="His_tRNA_synth"/>
    <property type="match status" value="1"/>
</dbReference>
<dbReference type="InterPro" id="IPR006195">
    <property type="entry name" value="aa-tRNA-synth_II"/>
</dbReference>
<dbReference type="InterPro" id="IPR045864">
    <property type="entry name" value="aa-tRNA-synth_II/BPL/LPL"/>
</dbReference>
<dbReference type="InterPro" id="IPR004154">
    <property type="entry name" value="Anticodon-bd"/>
</dbReference>
<dbReference type="InterPro" id="IPR036621">
    <property type="entry name" value="Anticodon-bd_dom_sf"/>
</dbReference>
<dbReference type="InterPro" id="IPR015807">
    <property type="entry name" value="His-tRNA-ligase"/>
</dbReference>
<dbReference type="InterPro" id="IPR041715">
    <property type="entry name" value="HisRS-like_core"/>
</dbReference>
<dbReference type="InterPro" id="IPR004516">
    <property type="entry name" value="HisRS/HisZ"/>
</dbReference>
<dbReference type="InterPro" id="IPR033656">
    <property type="entry name" value="HisRS_anticodon"/>
</dbReference>
<dbReference type="NCBIfam" id="TIGR00442">
    <property type="entry name" value="hisS"/>
    <property type="match status" value="1"/>
</dbReference>
<dbReference type="PANTHER" id="PTHR43707:SF1">
    <property type="entry name" value="HISTIDINE--TRNA LIGASE, MITOCHONDRIAL-RELATED"/>
    <property type="match status" value="1"/>
</dbReference>
<dbReference type="PANTHER" id="PTHR43707">
    <property type="entry name" value="HISTIDYL-TRNA SYNTHETASE"/>
    <property type="match status" value="1"/>
</dbReference>
<dbReference type="Pfam" id="PF03129">
    <property type="entry name" value="HGTP_anticodon"/>
    <property type="match status" value="1"/>
</dbReference>
<dbReference type="Pfam" id="PF13393">
    <property type="entry name" value="tRNA-synt_His"/>
    <property type="match status" value="1"/>
</dbReference>
<dbReference type="PIRSF" id="PIRSF001549">
    <property type="entry name" value="His-tRNA_synth"/>
    <property type="match status" value="1"/>
</dbReference>
<dbReference type="SUPFAM" id="SSF52954">
    <property type="entry name" value="Class II aaRS ABD-related"/>
    <property type="match status" value="1"/>
</dbReference>
<dbReference type="SUPFAM" id="SSF55681">
    <property type="entry name" value="Class II aaRS and biotin synthetases"/>
    <property type="match status" value="1"/>
</dbReference>
<dbReference type="PROSITE" id="PS50862">
    <property type="entry name" value="AA_TRNA_LIGASE_II"/>
    <property type="match status" value="1"/>
</dbReference>
<reference key="1">
    <citation type="journal article" date="2009" name="PLoS Genet.">
        <title>Organised genome dynamics in the Escherichia coli species results in highly diverse adaptive paths.</title>
        <authorList>
            <person name="Touchon M."/>
            <person name="Hoede C."/>
            <person name="Tenaillon O."/>
            <person name="Barbe V."/>
            <person name="Baeriswyl S."/>
            <person name="Bidet P."/>
            <person name="Bingen E."/>
            <person name="Bonacorsi S."/>
            <person name="Bouchier C."/>
            <person name="Bouvet O."/>
            <person name="Calteau A."/>
            <person name="Chiapello H."/>
            <person name="Clermont O."/>
            <person name="Cruveiller S."/>
            <person name="Danchin A."/>
            <person name="Diard M."/>
            <person name="Dossat C."/>
            <person name="Karoui M.E."/>
            <person name="Frapy E."/>
            <person name="Garry L."/>
            <person name="Ghigo J.M."/>
            <person name="Gilles A.M."/>
            <person name="Johnson J."/>
            <person name="Le Bouguenec C."/>
            <person name="Lescat M."/>
            <person name="Mangenot S."/>
            <person name="Martinez-Jehanne V."/>
            <person name="Matic I."/>
            <person name="Nassif X."/>
            <person name="Oztas S."/>
            <person name="Petit M.A."/>
            <person name="Pichon C."/>
            <person name="Rouy Z."/>
            <person name="Ruf C.S."/>
            <person name="Schneider D."/>
            <person name="Tourret J."/>
            <person name="Vacherie B."/>
            <person name="Vallenet D."/>
            <person name="Medigue C."/>
            <person name="Rocha E.P.C."/>
            <person name="Denamur E."/>
        </authorList>
    </citation>
    <scope>NUCLEOTIDE SEQUENCE [LARGE SCALE GENOMIC DNA]</scope>
    <source>
        <strain>ATCC 35469 / DSM 13698 / BCRC 15582 / CCUG 18766 / IAM 14443 / JCM 21226 / LMG 7866 / NBRC 102419 / NCTC 12128 / CDC 0568-73</strain>
    </source>
</reference>
<evidence type="ECO:0000255" key="1">
    <source>
        <dbReference type="HAMAP-Rule" id="MF_00127"/>
    </source>
</evidence>
<feature type="chain" id="PRO_1000199137" description="Histidine--tRNA ligase">
    <location>
        <begin position="1"/>
        <end position="429"/>
    </location>
</feature>
<proteinExistence type="inferred from homology"/>
<organism>
    <name type="scientific">Escherichia fergusonii (strain ATCC 35469 / DSM 13698 / CCUG 18766 / IAM 14443 / JCM 21226 / LMG 7866 / NBRC 102419 / NCTC 12128 / CDC 0568-73)</name>
    <dbReference type="NCBI Taxonomy" id="585054"/>
    <lineage>
        <taxon>Bacteria</taxon>
        <taxon>Pseudomonadati</taxon>
        <taxon>Pseudomonadota</taxon>
        <taxon>Gammaproteobacteria</taxon>
        <taxon>Enterobacterales</taxon>
        <taxon>Enterobacteriaceae</taxon>
        <taxon>Escherichia</taxon>
    </lineage>
</organism>
<protein>
    <recommendedName>
        <fullName evidence="1">Histidine--tRNA ligase</fullName>
        <ecNumber evidence="1">6.1.1.21</ecNumber>
    </recommendedName>
    <alternativeName>
        <fullName evidence="1">Histidyl-tRNA synthetase</fullName>
        <shortName evidence="1">HisRS</shortName>
    </alternativeName>
</protein>
<name>SYH_ESCF3</name>
<accession>B7LKC4</accession>
<gene>
    <name evidence="1" type="primary">hisS</name>
    <name type="ordered locus">EFER_0658</name>
</gene>
<comment type="catalytic activity">
    <reaction evidence="1">
        <text>tRNA(His) + L-histidine + ATP = L-histidyl-tRNA(His) + AMP + diphosphate + H(+)</text>
        <dbReference type="Rhea" id="RHEA:17313"/>
        <dbReference type="Rhea" id="RHEA-COMP:9665"/>
        <dbReference type="Rhea" id="RHEA-COMP:9689"/>
        <dbReference type="ChEBI" id="CHEBI:15378"/>
        <dbReference type="ChEBI" id="CHEBI:30616"/>
        <dbReference type="ChEBI" id="CHEBI:33019"/>
        <dbReference type="ChEBI" id="CHEBI:57595"/>
        <dbReference type="ChEBI" id="CHEBI:78442"/>
        <dbReference type="ChEBI" id="CHEBI:78527"/>
        <dbReference type="ChEBI" id="CHEBI:456215"/>
        <dbReference type="EC" id="6.1.1.21"/>
    </reaction>
</comment>
<comment type="subunit">
    <text evidence="1">Homodimer.</text>
</comment>
<comment type="subcellular location">
    <subcellularLocation>
        <location evidence="1">Cytoplasm</location>
    </subcellularLocation>
</comment>
<comment type="similarity">
    <text evidence="1">Belongs to the class-II aminoacyl-tRNA synthetase family.</text>
</comment>
<sequence>MSKKIQSVRGMNDYLPVETAVWQRVERIIKSVVESYGYSEIRTPILEQTPLFKRAIGEVTDVVEKEMYTFNDRERDAKEVVSLTLRPEGTAGCVRAGIEHGLLYNQEQRLWYMGPMFRHERPQKGRYRQFHQIGLEVFGLQGPDIDAELIMLTARWWRELGISEHVTLELNSIGSLEARANYRDALVAFLEQHKEKLDEDCKRRMYTNPLRVLDSKNPEVQALLNDAPALGDYLDEESREHFAGLCKLLESAGIAYTVNQRLVRGLDYYNRTVFEWVTNSLGSQGTVCAGGRYDGLVEQLGGRATSAVGFAMGLERLVLLVQAVNPEFKADPVVDIYLVASGADTQPAAMALAERLRDELPGVKLMTNHGGGNFKKQFGRADKWGARIAVVLGESEVANGTAVVKDLRSGEQTAVAQDSVAAHLRTLLG</sequence>